<reference key="1">
    <citation type="journal article" date="1995" name="J. Mol. Biol.">
        <title>The DNA sequence of equine herpesvirus 2.</title>
        <authorList>
            <person name="Telford E.A.R."/>
            <person name="Watson M.S."/>
            <person name="Aird H.C."/>
            <person name="Perry J."/>
            <person name="Davison A.J."/>
        </authorList>
    </citation>
    <scope>NUCLEOTIDE SEQUENCE [LARGE SCALE GENOMIC DNA]</scope>
</reference>
<sequence>MRNILKVTRFDDGTVQEVVHRDGLRVETYYKSEEGEARANLEQRPPAAADEARTYLSPSSSFSSSSSSSSAVALGARPDLAQGGGRGSERRERGCRWNGCPPLAIVLPVLANLIMCAMLAWYLNPLFSPWVYFNCTNSSLGVGNCSNFFGCSRGNLSVNDSFWPPGSVVFGKDGCAVSASVLGLVGPGVLCNGTGCA</sequence>
<organismHost>
    <name type="scientific">Equus caballus</name>
    <name type="common">Horse</name>
    <dbReference type="NCBI Taxonomy" id="9796"/>
</organismHost>
<keyword id="KW-1043">Host membrane</keyword>
<keyword id="KW-0472">Membrane</keyword>
<keyword id="KW-1185">Reference proteome</keyword>
<keyword id="KW-0812">Transmembrane</keyword>
<keyword id="KW-1133">Transmembrane helix</keyword>
<name>VG27_EHV2</name>
<gene>
    <name type="primary">27</name>
</gene>
<organism>
    <name type="scientific">Equine herpesvirus 2 (strain 86/87)</name>
    <name type="common">EHV-2</name>
    <dbReference type="NCBI Taxonomy" id="82831"/>
    <lineage>
        <taxon>Viruses</taxon>
        <taxon>Duplodnaviria</taxon>
        <taxon>Heunggongvirae</taxon>
        <taxon>Peploviricota</taxon>
        <taxon>Herviviricetes</taxon>
        <taxon>Herpesvirales</taxon>
        <taxon>Orthoherpesviridae</taxon>
        <taxon>Gammaherpesvirinae</taxon>
        <taxon>Percavirus</taxon>
        <taxon>Percavirus equidgamma2</taxon>
        <taxon>Equid gammaherpesvirus 2</taxon>
    </lineage>
</organism>
<protein>
    <recommendedName>
        <fullName>Uncharacterized gene 27 protein</fullName>
    </recommendedName>
</protein>
<evidence type="ECO:0000255" key="1"/>
<evidence type="ECO:0000305" key="2"/>
<accession>Q66630</accession>
<dbReference type="EMBL" id="U20824">
    <property type="protein sequence ID" value="AAC13814.1"/>
    <property type="molecule type" value="Genomic_DNA"/>
</dbReference>
<dbReference type="PIR" id="S55621">
    <property type="entry name" value="S55621"/>
</dbReference>
<dbReference type="KEGG" id="vg:1461022"/>
<dbReference type="Proteomes" id="UP000007083">
    <property type="component" value="Segment"/>
</dbReference>
<dbReference type="GO" id="GO:0033644">
    <property type="term" value="C:host cell membrane"/>
    <property type="evidence" value="ECO:0007669"/>
    <property type="project" value="UniProtKB-SubCell"/>
</dbReference>
<dbReference type="GO" id="GO:0016020">
    <property type="term" value="C:membrane"/>
    <property type="evidence" value="ECO:0007669"/>
    <property type="project" value="UniProtKB-KW"/>
</dbReference>
<feature type="chain" id="PRO_0000406025" description="Uncharacterized gene 27 protein">
    <location>
        <begin position="1"/>
        <end position="197"/>
    </location>
</feature>
<feature type="transmembrane region" description="Helical" evidence="1">
    <location>
        <begin position="103"/>
        <end position="123"/>
    </location>
</feature>
<proteinExistence type="predicted"/>
<comment type="subcellular location">
    <subcellularLocation>
        <location evidence="2">Host membrane</location>
        <topology evidence="2">Single-pass membrane protein</topology>
    </subcellularLocation>
</comment>